<reference evidence="6" key="1">
    <citation type="submission" date="2001-06" db="EMBL/GenBank/DDBJ databases">
        <title>Vomeronasal receptor gene diversity in the mammalian genome.</title>
        <authorList>
            <person name="Sam M."/>
            <person name="Matsunami H."/>
            <person name="Buck L."/>
        </authorList>
    </citation>
    <scope>NUCLEOTIDE SEQUENCE [GENOMIC DNA]</scope>
</reference>
<reference key="2">
    <citation type="journal article" date="2004" name="Genome Res.">
        <title>The status, quality, and expansion of the NIH full-length cDNA project: the Mammalian Gene Collection (MGC).</title>
        <authorList>
            <consortium name="The MGC Project Team"/>
        </authorList>
    </citation>
    <scope>NUCLEOTIDE SEQUENCE [LARGE SCALE MRNA]</scope>
    <source>
        <tissue>Brain</tissue>
    </source>
</reference>
<reference evidence="5" key="3">
    <citation type="journal article" date="2000" name="Genome Res.">
        <title>Sequence diversity and genomic organization of vomeronasal receptor genes in the mouse.</title>
        <authorList>
            <person name="Del Punta K."/>
            <person name="Rothman A."/>
            <person name="Rodriguez I."/>
            <person name="Mombaerts P."/>
        </authorList>
    </citation>
    <scope>NUCLEOTIDE SEQUENCE [GENOMIC DNA] OF 17-329</scope>
    <source>
        <strain evidence="5">129/SvJ</strain>
    </source>
</reference>
<reference evidence="4" key="4">
    <citation type="journal article" date="2002" name="Nature">
        <title>Deficient pheromone responses in mice lacking a cluster of vomeronasal receptor genes.</title>
        <authorList>
            <person name="Del Punta K."/>
            <person name="Leinders-Zufall T."/>
            <person name="Rodriguez I."/>
            <person name="Jukam D."/>
            <person name="Wysocki C.J."/>
            <person name="Ogawa S."/>
            <person name="Zufall F."/>
            <person name="Mombaerts P."/>
        </authorList>
    </citation>
    <scope>PUTATIVE FUNCTION</scope>
    <scope>DISRUPTION PHENOTYPE</scope>
</reference>
<proteinExistence type="evidence at transcript level"/>
<accession>Q8VIC9</accession>
<accession>Q05A91</accession>
<accession>Q9EQ50</accession>
<protein>
    <recommendedName>
        <fullName>Vomeronasal type-1 receptor 43</fullName>
    </recommendedName>
    <alternativeName>
        <fullName>Vomeronasal type-1 receptor A2</fullName>
    </alternativeName>
    <alternativeName>
        <fullName>Vomeronasal type-1 receptor A5</fullName>
    </alternativeName>
</protein>
<organism>
    <name type="scientific">Mus musculus</name>
    <name type="common">Mouse</name>
    <dbReference type="NCBI Taxonomy" id="10090"/>
    <lineage>
        <taxon>Eukaryota</taxon>
        <taxon>Metazoa</taxon>
        <taxon>Chordata</taxon>
        <taxon>Craniata</taxon>
        <taxon>Vertebrata</taxon>
        <taxon>Euteleostomi</taxon>
        <taxon>Mammalia</taxon>
        <taxon>Eutheria</taxon>
        <taxon>Euarchontoglires</taxon>
        <taxon>Glires</taxon>
        <taxon>Rodentia</taxon>
        <taxon>Myomorpha</taxon>
        <taxon>Muroidea</taxon>
        <taxon>Muridae</taxon>
        <taxon>Murinae</taxon>
        <taxon>Mus</taxon>
        <taxon>Mus</taxon>
    </lineage>
</organism>
<dbReference type="EMBL" id="AB062893">
    <property type="protein sequence ID" value="BAB79211.1"/>
    <property type="molecule type" value="Genomic_DNA"/>
</dbReference>
<dbReference type="EMBL" id="BC125364">
    <property type="protein sequence ID" value="AAI25365.1"/>
    <property type="molecule type" value="mRNA"/>
</dbReference>
<dbReference type="EMBL" id="AF291484">
    <property type="protein sequence ID" value="AAG42078.1"/>
    <property type="molecule type" value="Genomic_DNA"/>
</dbReference>
<dbReference type="CCDS" id="CCDS57440.1"/>
<dbReference type="RefSeq" id="NP_444450.2">
    <property type="nucleotide sequence ID" value="NM_053220.2"/>
</dbReference>
<dbReference type="SMR" id="Q8VIC9"/>
<dbReference type="STRING" id="10090.ENSMUSP00000153713"/>
<dbReference type="GlyCosmos" id="Q8VIC9">
    <property type="glycosylation" value="2 sites, No reported glycans"/>
</dbReference>
<dbReference type="GlyGen" id="Q8VIC9">
    <property type="glycosylation" value="2 sites"/>
</dbReference>
<dbReference type="PaxDb" id="10090-ENSMUSP00000086839"/>
<dbReference type="ProteomicsDB" id="300102"/>
<dbReference type="DNASU" id="113847"/>
<dbReference type="Ensembl" id="ENSMUST00000089418.5">
    <property type="protein sequence ID" value="ENSMUSP00000086839.3"/>
    <property type="gene ID" value="ENSMUSG00000068231.6"/>
</dbReference>
<dbReference type="Ensembl" id="ENSMUST00000226741.2">
    <property type="protein sequence ID" value="ENSMUSP00000154439.2"/>
    <property type="gene ID" value="ENSMUSG00000068231.6"/>
</dbReference>
<dbReference type="Ensembl" id="ENSMUST00000226983.2">
    <property type="protein sequence ID" value="ENSMUSP00000153713.2"/>
    <property type="gene ID" value="ENSMUSG00000068231.6"/>
</dbReference>
<dbReference type="Ensembl" id="ENSMUST00000228709.2">
    <property type="protein sequence ID" value="ENSMUSP00000154510.2"/>
    <property type="gene ID" value="ENSMUSG00000068231.6"/>
</dbReference>
<dbReference type="GeneID" id="113847"/>
<dbReference type="KEGG" id="mmu:113847"/>
<dbReference type="UCSC" id="uc009cwn.2">
    <property type="organism name" value="mouse"/>
</dbReference>
<dbReference type="AGR" id="MGI:2148510"/>
<dbReference type="CTD" id="113847"/>
<dbReference type="MGI" id="MGI:2148510">
    <property type="gene designation" value="Vmn1r43"/>
</dbReference>
<dbReference type="VEuPathDB" id="HostDB:ENSMUSG00000068231"/>
<dbReference type="eggNOG" id="ENOG502SNRJ">
    <property type="taxonomic scope" value="Eukaryota"/>
</dbReference>
<dbReference type="GeneTree" id="ENSGT01030000234553"/>
<dbReference type="HOGENOM" id="CLU_058641_4_0_1"/>
<dbReference type="InParanoid" id="Q8VIC9"/>
<dbReference type="OMA" id="LMFICTE"/>
<dbReference type="OrthoDB" id="9620038at2759"/>
<dbReference type="PhylomeDB" id="Q8VIC9"/>
<dbReference type="BioGRID-ORCS" id="113847">
    <property type="hits" value="2 hits in 52 CRISPR screens"/>
</dbReference>
<dbReference type="PRO" id="PR:Q8VIC9"/>
<dbReference type="Proteomes" id="UP000000589">
    <property type="component" value="Chromosome 6"/>
</dbReference>
<dbReference type="RNAct" id="Q8VIC9">
    <property type="molecule type" value="protein"/>
</dbReference>
<dbReference type="Bgee" id="ENSMUSG00000068231">
    <property type="expression patterns" value="Expressed in ectoplacental cone and 12 other cell types or tissues"/>
</dbReference>
<dbReference type="GO" id="GO:0005886">
    <property type="term" value="C:plasma membrane"/>
    <property type="evidence" value="ECO:0007669"/>
    <property type="project" value="UniProtKB-SubCell"/>
</dbReference>
<dbReference type="GO" id="GO:0016503">
    <property type="term" value="F:pheromone receptor activity"/>
    <property type="evidence" value="ECO:0007669"/>
    <property type="project" value="InterPro"/>
</dbReference>
<dbReference type="GO" id="GO:0019236">
    <property type="term" value="P:response to pheromone"/>
    <property type="evidence" value="ECO:0007669"/>
    <property type="project" value="UniProtKB-KW"/>
</dbReference>
<dbReference type="GO" id="GO:0007606">
    <property type="term" value="P:sensory perception of chemical stimulus"/>
    <property type="evidence" value="ECO:0000304"/>
    <property type="project" value="MGI"/>
</dbReference>
<dbReference type="CDD" id="cd13949">
    <property type="entry name" value="7tm_V1R_pheromone"/>
    <property type="match status" value="1"/>
</dbReference>
<dbReference type="FunFam" id="1.20.1070.10:FF:000051">
    <property type="entry name" value="Vomeronasal type-1 receptor"/>
    <property type="match status" value="1"/>
</dbReference>
<dbReference type="Gene3D" id="1.20.1070.10">
    <property type="entry name" value="Rhodopsin 7-helix transmembrane proteins"/>
    <property type="match status" value="1"/>
</dbReference>
<dbReference type="InterPro" id="IPR017452">
    <property type="entry name" value="GPCR_Rhodpsn_7TM"/>
</dbReference>
<dbReference type="InterPro" id="IPR004072">
    <property type="entry name" value="Vmron_rcpt_1"/>
</dbReference>
<dbReference type="PANTHER" id="PTHR24062">
    <property type="entry name" value="VOMERONASAL TYPE-1 RECEPTOR"/>
    <property type="match status" value="1"/>
</dbReference>
<dbReference type="Pfam" id="PF03402">
    <property type="entry name" value="V1R"/>
    <property type="match status" value="1"/>
</dbReference>
<dbReference type="PRINTS" id="PR01534">
    <property type="entry name" value="VOMERONASL1R"/>
</dbReference>
<dbReference type="SUPFAM" id="SSF81321">
    <property type="entry name" value="Family A G protein-coupled receptor-like"/>
    <property type="match status" value="1"/>
</dbReference>
<dbReference type="PROSITE" id="PS50262">
    <property type="entry name" value="G_PROTEIN_RECEP_F1_2"/>
    <property type="match status" value="1"/>
</dbReference>
<comment type="function">
    <text evidence="3">Putative pheromone receptor implicated in the regulation of social and reproductive behavior.</text>
</comment>
<comment type="subcellular location">
    <subcellularLocation>
        <location evidence="4">Cell membrane</location>
        <topology evidence="1">Multi-pass membrane protein</topology>
    </subcellularLocation>
</comment>
<comment type="disruption phenotype">
    <text evidence="3">Mice lacking all but one V1ra and V1rb gene (12% of the V1r repertoire) show a lack of chemosensory response to a subset of known pheromonal ligands and changes in maternal aggression as well as male reproductive behavior.</text>
</comment>
<comment type="similarity">
    <text evidence="2">Belongs to the G-protein coupled receptor 1 family.</text>
</comment>
<keyword id="KW-1003">Cell membrane</keyword>
<keyword id="KW-1015">Disulfide bond</keyword>
<keyword id="KW-0297">G-protein coupled receptor</keyword>
<keyword id="KW-0325">Glycoprotein</keyword>
<keyword id="KW-0472">Membrane</keyword>
<keyword id="KW-0589">Pheromone response</keyword>
<keyword id="KW-0675">Receptor</keyword>
<keyword id="KW-1185">Reference proteome</keyword>
<keyword id="KW-0807">Transducer</keyword>
<keyword id="KW-0812">Transmembrane</keyword>
<keyword id="KW-1133">Transmembrane helix</keyword>
<sequence>MSKILFFSPCSLFSHTMNKNSRLHTNSNIGNTFFSEIGIGITGNSFLLLYHILKFIRGHRPRLTDLPIGLLSLIHLLMLLVAAFIATDIFISRRGWDDIICKFLVYLYRVLRGLSLCTTSMLSVLQAIILSPRSSCLSKFKHISLHHILCAILFLSVLYMLISSQLLVSIIATPNLTTNDLTYVTQSCSILPLSYLVESINSTLLAIREYFLISLMFLSTWYIVALLCMHRKQTQHLQETRLSLKKSPEQSATQTILMLMTFFVLMTIYDNIVSCLRTMLLNDPTSYSIELFMIHIYATVSPFVFMSNEKHIVNFLRSMGKRMINLNLH</sequence>
<name>V1R43_MOUSE</name>
<evidence type="ECO:0000255" key="1"/>
<evidence type="ECO:0000255" key="2">
    <source>
        <dbReference type="PROSITE-ProRule" id="PRU00521"/>
    </source>
</evidence>
<evidence type="ECO:0000269" key="3">
    <source>
    </source>
</evidence>
<evidence type="ECO:0000305" key="4"/>
<evidence type="ECO:0000312" key="5">
    <source>
        <dbReference type="EMBL" id="AAG42078.1"/>
    </source>
</evidence>
<evidence type="ECO:0000312" key="6">
    <source>
        <dbReference type="EMBL" id="BAB79211.1"/>
    </source>
</evidence>
<feature type="chain" id="PRO_0000239960" description="Vomeronasal type-1 receptor 43">
    <location>
        <begin position="1"/>
        <end position="329"/>
    </location>
</feature>
<feature type="topological domain" description="Extracellular" evidence="1">
    <location>
        <begin position="1"/>
        <end position="32"/>
    </location>
</feature>
<feature type="transmembrane region" description="Helical; Name=1" evidence="1">
    <location>
        <begin position="33"/>
        <end position="53"/>
    </location>
</feature>
<feature type="topological domain" description="Cytoplasmic" evidence="1">
    <location>
        <begin position="54"/>
        <end position="65"/>
    </location>
</feature>
<feature type="transmembrane region" description="Helical; Name=2" evidence="1">
    <location>
        <begin position="66"/>
        <end position="86"/>
    </location>
</feature>
<feature type="topological domain" description="Extracellular" evidence="1">
    <location>
        <begin position="87"/>
        <end position="109"/>
    </location>
</feature>
<feature type="transmembrane region" description="Helical; Name=3" evidence="1">
    <location>
        <begin position="110"/>
        <end position="130"/>
    </location>
</feature>
<feature type="topological domain" description="Cytoplasmic" evidence="1">
    <location>
        <begin position="131"/>
        <end position="147"/>
    </location>
</feature>
<feature type="transmembrane region" description="Helical; Name=4" evidence="1">
    <location>
        <begin position="148"/>
        <end position="168"/>
    </location>
</feature>
<feature type="topological domain" description="Extracellular" evidence="1">
    <location>
        <begin position="169"/>
        <end position="209"/>
    </location>
</feature>
<feature type="transmembrane region" description="Helical; Name=5" evidence="1">
    <location>
        <begin position="210"/>
        <end position="230"/>
    </location>
</feature>
<feature type="topological domain" description="Cytoplasmic" evidence="1">
    <location>
        <begin position="231"/>
        <end position="255"/>
    </location>
</feature>
<feature type="transmembrane region" description="Helical; Name=6" evidence="1">
    <location>
        <begin position="256"/>
        <end position="276"/>
    </location>
</feature>
<feature type="topological domain" description="Extracellular" evidence="1">
    <location>
        <begin position="277"/>
        <end position="285"/>
    </location>
</feature>
<feature type="transmembrane region" description="Helical; Name=7" evidence="1">
    <location>
        <begin position="286"/>
        <end position="306"/>
    </location>
</feature>
<feature type="topological domain" description="Cytoplasmic" evidence="1">
    <location>
        <begin position="307"/>
        <end position="329"/>
    </location>
</feature>
<feature type="glycosylation site" description="N-linked (GlcNAc...) asparagine" evidence="1">
    <location>
        <position position="175"/>
    </location>
</feature>
<feature type="glycosylation site" description="N-linked (GlcNAc...) asparagine" evidence="1">
    <location>
        <position position="201"/>
    </location>
</feature>
<feature type="disulfide bond" evidence="2">
    <location>
        <begin position="101"/>
        <end position="188"/>
    </location>
</feature>
<gene>
    <name type="primary">Vmn1r43</name>
    <name evidence="6" type="synonym">V1ra2</name>
    <name type="synonym">V1ra5</name>
</gene>